<reference key="1">
    <citation type="submission" date="2006-09" db="EMBL/GenBank/DDBJ databases">
        <authorList>
            <consortium name="NIH - Zebrafish Gene Collection (ZGC) project"/>
        </authorList>
    </citation>
    <scope>NUCLEOTIDE SEQUENCE [LARGE SCALE MRNA]</scope>
    <source>
        <tissue>Skin</tissue>
    </source>
</reference>
<accession>Q08CB3</accession>
<dbReference type="EMBL" id="BC124308">
    <property type="protein sequence ID" value="AAI24309.1"/>
    <property type="status" value="ALT_INIT"/>
    <property type="molecule type" value="mRNA"/>
</dbReference>
<dbReference type="RefSeq" id="NP_001070055.2">
    <property type="nucleotide sequence ID" value="NM_001076587.2"/>
</dbReference>
<dbReference type="RefSeq" id="XP_017207168.1">
    <property type="nucleotide sequence ID" value="XM_017351679.1"/>
</dbReference>
<dbReference type="STRING" id="7955.ENSDARP00000081999"/>
<dbReference type="PaxDb" id="7955-ENSDARP00000081999"/>
<dbReference type="Ensembl" id="ENSDART00000087565">
    <property type="protein sequence ID" value="ENSDARP00000081999"/>
    <property type="gene ID" value="ENSDARG00000061405"/>
</dbReference>
<dbReference type="GeneID" id="767647"/>
<dbReference type="KEGG" id="dre:767647"/>
<dbReference type="AGR" id="ZFIN:ZDB-GENE-060929-200"/>
<dbReference type="CTD" id="84141"/>
<dbReference type="ZFIN" id="ZDB-GENE-060929-200">
    <property type="gene designation" value="eva1a"/>
</dbReference>
<dbReference type="eggNOG" id="ENOG502S091">
    <property type="taxonomic scope" value="Eukaryota"/>
</dbReference>
<dbReference type="HOGENOM" id="CLU_104871_1_0_1"/>
<dbReference type="InParanoid" id="Q08CB3"/>
<dbReference type="OMA" id="VMKISCH"/>
<dbReference type="OrthoDB" id="5970528at2759"/>
<dbReference type="PhylomeDB" id="Q08CB3"/>
<dbReference type="TreeFam" id="TF352986"/>
<dbReference type="PRO" id="PR:Q08CB3"/>
<dbReference type="Proteomes" id="UP000000437">
    <property type="component" value="Chromosome 17"/>
</dbReference>
<dbReference type="Bgee" id="ENSDARG00000061405">
    <property type="expression patterns" value="Expressed in swim bladder and 9 other cell types or tissues"/>
</dbReference>
<dbReference type="GO" id="GO:0005789">
    <property type="term" value="C:endoplasmic reticulum membrane"/>
    <property type="evidence" value="ECO:0007669"/>
    <property type="project" value="UniProtKB-SubCell"/>
</dbReference>
<dbReference type="GO" id="GO:0005765">
    <property type="term" value="C:lysosomal membrane"/>
    <property type="evidence" value="ECO:0007669"/>
    <property type="project" value="UniProtKB-SubCell"/>
</dbReference>
<dbReference type="GO" id="GO:0006915">
    <property type="term" value="P:apoptotic process"/>
    <property type="evidence" value="ECO:0007669"/>
    <property type="project" value="UniProtKB-KW"/>
</dbReference>
<dbReference type="GO" id="GO:0006914">
    <property type="term" value="P:autophagy"/>
    <property type="evidence" value="ECO:0007669"/>
    <property type="project" value="UniProtKB-KW"/>
</dbReference>
<dbReference type="InterPro" id="IPR052461">
    <property type="entry name" value="EVA1_A/B"/>
</dbReference>
<dbReference type="InterPro" id="IPR039500">
    <property type="entry name" value="EVA1_dom"/>
</dbReference>
<dbReference type="PANTHER" id="PTHR48422:SF1">
    <property type="entry name" value="PROTEIN EVA-1 HOMOLOG A"/>
    <property type="match status" value="1"/>
</dbReference>
<dbReference type="PANTHER" id="PTHR48422">
    <property type="entry name" value="PROTEIN EVA-1 HOMOLOG B-RELATED"/>
    <property type="match status" value="1"/>
</dbReference>
<dbReference type="Pfam" id="PF14851">
    <property type="entry name" value="FAM176"/>
    <property type="match status" value="1"/>
</dbReference>
<feature type="chain" id="PRO_0000278673" description="Protein eva-1 homolog A">
    <location>
        <begin position="1"/>
        <end position="153"/>
    </location>
</feature>
<feature type="transmembrane region" description="Helical" evidence="2">
    <location>
        <begin position="37"/>
        <end position="57"/>
    </location>
</feature>
<feature type="region of interest" description="Disordered" evidence="3">
    <location>
        <begin position="66"/>
        <end position="97"/>
    </location>
</feature>
<proteinExistence type="evidence at transcript level"/>
<comment type="function">
    <text evidence="1">Acts as a regulator of programmed cell death, mediating both autophagy and apoptosis.</text>
</comment>
<comment type="subcellular location">
    <subcellularLocation>
        <location evidence="1">Endoplasmic reticulum membrane</location>
        <topology evidence="1">Single-pass membrane protein</topology>
    </subcellularLocation>
    <subcellularLocation>
        <location evidence="1">Lysosome membrane</location>
        <topology evidence="1">Single-pass membrane protein</topology>
    </subcellularLocation>
</comment>
<comment type="similarity">
    <text evidence="4">Belongs to the EVA1 family.</text>
</comment>
<comment type="sequence caution" evidence="4">
    <conflict type="erroneous initiation">
        <sequence resource="EMBL-CDS" id="AAI24309"/>
    </conflict>
    <text>Truncated N-terminus.</text>
</comment>
<organism>
    <name type="scientific">Danio rerio</name>
    <name type="common">Zebrafish</name>
    <name type="synonym">Brachydanio rerio</name>
    <dbReference type="NCBI Taxonomy" id="7955"/>
    <lineage>
        <taxon>Eukaryota</taxon>
        <taxon>Metazoa</taxon>
        <taxon>Chordata</taxon>
        <taxon>Craniata</taxon>
        <taxon>Vertebrata</taxon>
        <taxon>Euteleostomi</taxon>
        <taxon>Actinopterygii</taxon>
        <taxon>Neopterygii</taxon>
        <taxon>Teleostei</taxon>
        <taxon>Ostariophysi</taxon>
        <taxon>Cypriniformes</taxon>
        <taxon>Danionidae</taxon>
        <taxon>Danioninae</taxon>
        <taxon>Danio</taxon>
    </lineage>
</organism>
<keyword id="KW-0053">Apoptosis</keyword>
<keyword id="KW-0072">Autophagy</keyword>
<keyword id="KW-0256">Endoplasmic reticulum</keyword>
<keyword id="KW-0458">Lysosome</keyword>
<keyword id="KW-0472">Membrane</keyword>
<keyword id="KW-1185">Reference proteome</keyword>
<keyword id="KW-0812">Transmembrane</keyword>
<keyword id="KW-1133">Transmembrane helix</keyword>
<protein>
    <recommendedName>
        <fullName>Protein eva-1 homolog A</fullName>
    </recommendedName>
    <alternativeName>
        <fullName>Protein FAM176A</fullName>
    </alternativeName>
    <alternativeName>
        <fullName>Transmembrane protein 166</fullName>
    </alternativeName>
</protein>
<gene>
    <name type="primary">Eva1a</name>
    <name type="synonym">fam176a</name>
    <name type="synonym">tmem166</name>
    <name type="ORF">zgc:153298</name>
</gene>
<evidence type="ECO:0000250" key="1"/>
<evidence type="ECO:0000255" key="2"/>
<evidence type="ECO:0000256" key="3">
    <source>
        <dbReference type="SAM" id="MobiDB-lite"/>
    </source>
</evidence>
<evidence type="ECO:0000305" key="4"/>
<sequence length="153" mass="17374">MVTAFLNERQATTEEMALVSNALAAYSFIADQPERAALYFVCGVCLGLVLTLIALVVQISCRTDCKTQQAPKKTGKTVENTSDTSDSDSDWDNTSDLSARRHRRFERTLGNVFTSAEELERAQRLEERERIIREIWMNGQPDMPGTRSLNRYY</sequence>
<name>EVA1A_DANRE</name>